<organism>
    <name type="scientific">Prochlorococcus marinus (strain MIT 9515)</name>
    <dbReference type="NCBI Taxonomy" id="167542"/>
    <lineage>
        <taxon>Bacteria</taxon>
        <taxon>Bacillati</taxon>
        <taxon>Cyanobacteriota</taxon>
        <taxon>Cyanophyceae</taxon>
        <taxon>Synechococcales</taxon>
        <taxon>Prochlorococcaceae</taxon>
        <taxon>Prochlorococcus</taxon>
    </lineage>
</organism>
<protein>
    <recommendedName>
        <fullName evidence="1">Argininosuccinate synthase</fullName>
        <ecNumber evidence="1">6.3.4.5</ecNumber>
    </recommendedName>
    <alternativeName>
        <fullName evidence="1">Citrulline--aspartate ligase</fullName>
    </alternativeName>
</protein>
<feature type="chain" id="PRO_1000000420" description="Argininosuccinate synthase">
    <location>
        <begin position="1"/>
        <end position="404"/>
    </location>
</feature>
<feature type="binding site" evidence="1">
    <location>
        <begin position="10"/>
        <end position="18"/>
    </location>
    <ligand>
        <name>ATP</name>
        <dbReference type="ChEBI" id="CHEBI:30616"/>
    </ligand>
</feature>
<feature type="binding site" evidence="1">
    <location>
        <position position="38"/>
    </location>
    <ligand>
        <name>ATP</name>
        <dbReference type="ChEBI" id="CHEBI:30616"/>
    </ligand>
</feature>
<feature type="binding site" evidence="1">
    <location>
        <position position="89"/>
    </location>
    <ligand>
        <name>L-citrulline</name>
        <dbReference type="ChEBI" id="CHEBI:57743"/>
    </ligand>
</feature>
<feature type="binding site" evidence="1">
    <location>
        <position position="119"/>
    </location>
    <ligand>
        <name>ATP</name>
        <dbReference type="ChEBI" id="CHEBI:30616"/>
    </ligand>
</feature>
<feature type="binding site" evidence="1">
    <location>
        <position position="121"/>
    </location>
    <ligand>
        <name>L-aspartate</name>
        <dbReference type="ChEBI" id="CHEBI:29991"/>
    </ligand>
</feature>
<feature type="binding site" evidence="1">
    <location>
        <position position="125"/>
    </location>
    <ligand>
        <name>L-aspartate</name>
        <dbReference type="ChEBI" id="CHEBI:29991"/>
    </ligand>
</feature>
<feature type="binding site" evidence="1">
    <location>
        <position position="125"/>
    </location>
    <ligand>
        <name>L-citrulline</name>
        <dbReference type="ChEBI" id="CHEBI:57743"/>
    </ligand>
</feature>
<feature type="binding site" evidence="1">
    <location>
        <position position="126"/>
    </location>
    <ligand>
        <name>L-aspartate</name>
        <dbReference type="ChEBI" id="CHEBI:29991"/>
    </ligand>
</feature>
<feature type="binding site" evidence="1">
    <location>
        <position position="129"/>
    </location>
    <ligand>
        <name>L-citrulline</name>
        <dbReference type="ChEBI" id="CHEBI:57743"/>
    </ligand>
</feature>
<feature type="binding site" evidence="1">
    <location>
        <position position="177"/>
    </location>
    <ligand>
        <name>L-citrulline</name>
        <dbReference type="ChEBI" id="CHEBI:57743"/>
    </ligand>
</feature>
<feature type="binding site" evidence="1">
    <location>
        <position position="186"/>
    </location>
    <ligand>
        <name>L-citrulline</name>
        <dbReference type="ChEBI" id="CHEBI:57743"/>
    </ligand>
</feature>
<feature type="binding site" evidence="1">
    <location>
        <position position="262"/>
    </location>
    <ligand>
        <name>L-citrulline</name>
        <dbReference type="ChEBI" id="CHEBI:57743"/>
    </ligand>
</feature>
<feature type="binding site" evidence="1">
    <location>
        <position position="274"/>
    </location>
    <ligand>
        <name>L-citrulline</name>
        <dbReference type="ChEBI" id="CHEBI:57743"/>
    </ligand>
</feature>
<sequence length="404" mass="44714">MQHPKKVVLAYSGGVDTSVCIPYLKNEYGISEVITFVADLGQGDDIESISQKALNSGATKSVIGNLVEDFVEKYAFPAIRANALYGEKYPLSTALARPLIAENLVKLARKLNAGAVAHGCTGKGNDQVRFDLAINALGPDLEIITPAREWKMSREEAILYGEKFGIPAPVSKKSPYSIDVNLLGRSVEAGFLEDPMQEPNEEVFAMTSSIDDSPNYPKDIEITFKNGFPIAIGNESLSPLKIIQKVNYLAGKNGFGRIDMIEDRVVGIKSREIYEAPGLLLLIKAHKELESITLNPDVLDFKNLVEKKWAQLVYQGFWFGPLKKALDGFIDATQTSVNGKVKIRLHKGNAIIIGRSSENNSLYREDLATYSKDDIFDHKQAEGFIYMWGMSNKIWAELNSKMNN</sequence>
<keyword id="KW-0028">Amino-acid biosynthesis</keyword>
<keyword id="KW-0055">Arginine biosynthesis</keyword>
<keyword id="KW-0067">ATP-binding</keyword>
<keyword id="KW-0963">Cytoplasm</keyword>
<keyword id="KW-0436">Ligase</keyword>
<keyword id="KW-0547">Nucleotide-binding</keyword>
<comment type="catalytic activity">
    <reaction evidence="1">
        <text>L-citrulline + L-aspartate + ATP = 2-(N(omega)-L-arginino)succinate + AMP + diphosphate + H(+)</text>
        <dbReference type="Rhea" id="RHEA:10932"/>
        <dbReference type="ChEBI" id="CHEBI:15378"/>
        <dbReference type="ChEBI" id="CHEBI:29991"/>
        <dbReference type="ChEBI" id="CHEBI:30616"/>
        <dbReference type="ChEBI" id="CHEBI:33019"/>
        <dbReference type="ChEBI" id="CHEBI:57472"/>
        <dbReference type="ChEBI" id="CHEBI:57743"/>
        <dbReference type="ChEBI" id="CHEBI:456215"/>
        <dbReference type="EC" id="6.3.4.5"/>
    </reaction>
</comment>
<comment type="pathway">
    <text evidence="1">Amino-acid biosynthesis; L-arginine biosynthesis; L-arginine from L-ornithine and carbamoyl phosphate: step 2/3.</text>
</comment>
<comment type="subunit">
    <text evidence="1">Homotetramer.</text>
</comment>
<comment type="subcellular location">
    <subcellularLocation>
        <location evidence="1">Cytoplasm</location>
    </subcellularLocation>
</comment>
<comment type="similarity">
    <text evidence="1">Belongs to the argininosuccinate synthase family. Type 1 subfamily.</text>
</comment>
<proteinExistence type="inferred from homology"/>
<reference key="1">
    <citation type="journal article" date="2007" name="PLoS Genet.">
        <title>Patterns and implications of gene gain and loss in the evolution of Prochlorococcus.</title>
        <authorList>
            <person name="Kettler G.C."/>
            <person name="Martiny A.C."/>
            <person name="Huang K."/>
            <person name="Zucker J."/>
            <person name="Coleman M.L."/>
            <person name="Rodrigue S."/>
            <person name="Chen F."/>
            <person name="Lapidus A."/>
            <person name="Ferriera S."/>
            <person name="Johnson J."/>
            <person name="Steglich C."/>
            <person name="Church G.M."/>
            <person name="Richardson P."/>
            <person name="Chisholm S.W."/>
        </authorList>
    </citation>
    <scope>NUCLEOTIDE SEQUENCE [LARGE SCALE GENOMIC DNA]</scope>
    <source>
        <strain>MIT 9515</strain>
    </source>
</reference>
<name>ASSY_PROM5</name>
<gene>
    <name evidence="1" type="primary">argG</name>
    <name type="ordered locus">P9515_18981</name>
</gene>
<accession>A2BZ94</accession>
<dbReference type="EC" id="6.3.4.5" evidence="1"/>
<dbReference type="EMBL" id="CP000552">
    <property type="protein sequence ID" value="ABM73105.1"/>
    <property type="molecule type" value="Genomic_DNA"/>
</dbReference>
<dbReference type="RefSeq" id="WP_011821189.1">
    <property type="nucleotide sequence ID" value="NC_008817.1"/>
</dbReference>
<dbReference type="SMR" id="A2BZ94"/>
<dbReference type="STRING" id="167542.P9515_18981"/>
<dbReference type="GeneID" id="60200661"/>
<dbReference type="KEGG" id="pmc:P9515_18981"/>
<dbReference type="eggNOG" id="COG0137">
    <property type="taxonomic scope" value="Bacteria"/>
</dbReference>
<dbReference type="HOGENOM" id="CLU_032784_4_2_3"/>
<dbReference type="OrthoDB" id="9801641at2"/>
<dbReference type="UniPathway" id="UPA00068">
    <property type="reaction ID" value="UER00113"/>
</dbReference>
<dbReference type="Proteomes" id="UP000001589">
    <property type="component" value="Chromosome"/>
</dbReference>
<dbReference type="GO" id="GO:0005737">
    <property type="term" value="C:cytoplasm"/>
    <property type="evidence" value="ECO:0007669"/>
    <property type="project" value="UniProtKB-SubCell"/>
</dbReference>
<dbReference type="GO" id="GO:0004055">
    <property type="term" value="F:argininosuccinate synthase activity"/>
    <property type="evidence" value="ECO:0007669"/>
    <property type="project" value="UniProtKB-UniRule"/>
</dbReference>
<dbReference type="GO" id="GO:0005524">
    <property type="term" value="F:ATP binding"/>
    <property type="evidence" value="ECO:0007669"/>
    <property type="project" value="UniProtKB-UniRule"/>
</dbReference>
<dbReference type="GO" id="GO:0000053">
    <property type="term" value="P:argininosuccinate metabolic process"/>
    <property type="evidence" value="ECO:0007669"/>
    <property type="project" value="TreeGrafter"/>
</dbReference>
<dbReference type="GO" id="GO:0006526">
    <property type="term" value="P:L-arginine biosynthetic process"/>
    <property type="evidence" value="ECO:0007669"/>
    <property type="project" value="UniProtKB-UniRule"/>
</dbReference>
<dbReference type="GO" id="GO:0000050">
    <property type="term" value="P:urea cycle"/>
    <property type="evidence" value="ECO:0007669"/>
    <property type="project" value="TreeGrafter"/>
</dbReference>
<dbReference type="CDD" id="cd01999">
    <property type="entry name" value="ASS"/>
    <property type="match status" value="1"/>
</dbReference>
<dbReference type="FunFam" id="3.40.50.620:FF:000019">
    <property type="entry name" value="Argininosuccinate synthase"/>
    <property type="match status" value="1"/>
</dbReference>
<dbReference type="FunFam" id="3.90.1260.10:FF:000007">
    <property type="entry name" value="Argininosuccinate synthase"/>
    <property type="match status" value="1"/>
</dbReference>
<dbReference type="Gene3D" id="3.90.1260.10">
    <property type="entry name" value="Argininosuccinate synthetase, chain A, domain 2"/>
    <property type="match status" value="1"/>
</dbReference>
<dbReference type="Gene3D" id="3.40.50.620">
    <property type="entry name" value="HUPs"/>
    <property type="match status" value="1"/>
</dbReference>
<dbReference type="Gene3D" id="1.20.5.470">
    <property type="entry name" value="Single helix bin"/>
    <property type="match status" value="1"/>
</dbReference>
<dbReference type="HAMAP" id="MF_00005">
    <property type="entry name" value="Arg_succ_synth_type1"/>
    <property type="match status" value="1"/>
</dbReference>
<dbReference type="InterPro" id="IPR048268">
    <property type="entry name" value="Arginosuc_syn_C"/>
</dbReference>
<dbReference type="InterPro" id="IPR048267">
    <property type="entry name" value="Arginosuc_syn_N"/>
</dbReference>
<dbReference type="InterPro" id="IPR001518">
    <property type="entry name" value="Arginosuc_synth"/>
</dbReference>
<dbReference type="InterPro" id="IPR018223">
    <property type="entry name" value="Arginosuc_synth_CS"/>
</dbReference>
<dbReference type="InterPro" id="IPR023434">
    <property type="entry name" value="Arginosuc_synth_type_1_subfam"/>
</dbReference>
<dbReference type="InterPro" id="IPR024074">
    <property type="entry name" value="AS_cat/multimer_dom_body"/>
</dbReference>
<dbReference type="InterPro" id="IPR014729">
    <property type="entry name" value="Rossmann-like_a/b/a_fold"/>
</dbReference>
<dbReference type="NCBIfam" id="TIGR00032">
    <property type="entry name" value="argG"/>
    <property type="match status" value="1"/>
</dbReference>
<dbReference type="NCBIfam" id="NF001770">
    <property type="entry name" value="PRK00509.1"/>
    <property type="match status" value="1"/>
</dbReference>
<dbReference type="PANTHER" id="PTHR11587">
    <property type="entry name" value="ARGININOSUCCINATE SYNTHASE"/>
    <property type="match status" value="1"/>
</dbReference>
<dbReference type="PANTHER" id="PTHR11587:SF2">
    <property type="entry name" value="ARGININOSUCCINATE SYNTHASE"/>
    <property type="match status" value="1"/>
</dbReference>
<dbReference type="Pfam" id="PF20979">
    <property type="entry name" value="Arginosuc_syn_C"/>
    <property type="match status" value="1"/>
</dbReference>
<dbReference type="Pfam" id="PF00764">
    <property type="entry name" value="Arginosuc_synth"/>
    <property type="match status" value="1"/>
</dbReference>
<dbReference type="SUPFAM" id="SSF52402">
    <property type="entry name" value="Adenine nucleotide alpha hydrolases-like"/>
    <property type="match status" value="1"/>
</dbReference>
<dbReference type="SUPFAM" id="SSF69864">
    <property type="entry name" value="Argininosuccinate synthetase, C-terminal domain"/>
    <property type="match status" value="1"/>
</dbReference>
<dbReference type="PROSITE" id="PS00564">
    <property type="entry name" value="ARGININOSUCCIN_SYN_1"/>
    <property type="match status" value="1"/>
</dbReference>
<dbReference type="PROSITE" id="PS00565">
    <property type="entry name" value="ARGININOSUCCIN_SYN_2"/>
    <property type="match status" value="1"/>
</dbReference>
<evidence type="ECO:0000255" key="1">
    <source>
        <dbReference type="HAMAP-Rule" id="MF_00005"/>
    </source>
</evidence>